<reference key="1">
    <citation type="submission" date="2006-12" db="EMBL/GenBank/DDBJ databases">
        <title>Complete sequence of Halorhodospira halophila SL1.</title>
        <authorList>
            <consortium name="US DOE Joint Genome Institute"/>
            <person name="Copeland A."/>
            <person name="Lucas S."/>
            <person name="Lapidus A."/>
            <person name="Barry K."/>
            <person name="Detter J.C."/>
            <person name="Glavina del Rio T."/>
            <person name="Hammon N."/>
            <person name="Israni S."/>
            <person name="Dalin E."/>
            <person name="Tice H."/>
            <person name="Pitluck S."/>
            <person name="Saunders E."/>
            <person name="Brettin T."/>
            <person name="Bruce D."/>
            <person name="Han C."/>
            <person name="Tapia R."/>
            <person name="Schmutz J."/>
            <person name="Larimer F."/>
            <person name="Land M."/>
            <person name="Hauser L."/>
            <person name="Kyrpides N."/>
            <person name="Mikhailova N."/>
            <person name="Hoff W."/>
            <person name="Richardson P."/>
        </authorList>
    </citation>
    <scope>NUCLEOTIDE SEQUENCE [LARGE SCALE GENOMIC DNA]</scope>
    <source>
        <strain>DSM 244 / SL1</strain>
    </source>
</reference>
<feature type="chain" id="PRO_1000094330" description="2-C-methyl-D-erythritol 4-phosphate cytidylyltransferase">
    <location>
        <begin position="1"/>
        <end position="242"/>
    </location>
</feature>
<feature type="site" description="Transition state stabilizer" evidence="1">
    <location>
        <position position="16"/>
    </location>
</feature>
<feature type="site" description="Transition state stabilizer" evidence="1">
    <location>
        <position position="24"/>
    </location>
</feature>
<feature type="site" description="Positions MEP for the nucleophilic attack" evidence="1">
    <location>
        <position position="159"/>
    </location>
</feature>
<feature type="site" description="Positions MEP for the nucleophilic attack" evidence="1">
    <location>
        <position position="215"/>
    </location>
</feature>
<comment type="function">
    <text evidence="1">Catalyzes the formation of 4-diphosphocytidyl-2-C-methyl-D-erythritol from CTP and 2-C-methyl-D-erythritol 4-phosphate (MEP).</text>
</comment>
<comment type="catalytic activity">
    <reaction evidence="1">
        <text>2-C-methyl-D-erythritol 4-phosphate + CTP + H(+) = 4-CDP-2-C-methyl-D-erythritol + diphosphate</text>
        <dbReference type="Rhea" id="RHEA:13429"/>
        <dbReference type="ChEBI" id="CHEBI:15378"/>
        <dbReference type="ChEBI" id="CHEBI:33019"/>
        <dbReference type="ChEBI" id="CHEBI:37563"/>
        <dbReference type="ChEBI" id="CHEBI:57823"/>
        <dbReference type="ChEBI" id="CHEBI:58262"/>
        <dbReference type="EC" id="2.7.7.60"/>
    </reaction>
</comment>
<comment type="pathway">
    <text evidence="1">Isoprenoid biosynthesis; isopentenyl diphosphate biosynthesis via DXP pathway; isopentenyl diphosphate from 1-deoxy-D-xylulose 5-phosphate: step 2/6.</text>
</comment>
<comment type="similarity">
    <text evidence="1">Belongs to the IspD/TarI cytidylyltransferase family. IspD subfamily.</text>
</comment>
<evidence type="ECO:0000255" key="1">
    <source>
        <dbReference type="HAMAP-Rule" id="MF_00108"/>
    </source>
</evidence>
<keyword id="KW-0414">Isoprene biosynthesis</keyword>
<keyword id="KW-0548">Nucleotidyltransferase</keyword>
<keyword id="KW-1185">Reference proteome</keyword>
<keyword id="KW-0808">Transferase</keyword>
<protein>
    <recommendedName>
        <fullName evidence="1">2-C-methyl-D-erythritol 4-phosphate cytidylyltransferase</fullName>
        <ecNumber evidence="1">2.7.7.60</ecNumber>
    </recommendedName>
    <alternativeName>
        <fullName evidence="1">4-diphosphocytidyl-2C-methyl-D-erythritol synthase</fullName>
    </alternativeName>
    <alternativeName>
        <fullName evidence="1">MEP cytidylyltransferase</fullName>
        <shortName evidence="1">MCT</shortName>
    </alternativeName>
</protein>
<accession>A1WWZ0</accession>
<sequence length="242" mass="25520">MGRYWAVIPAAGVGRRMGGGDRPKQYRLLLGRPVIGWALERLLGHPKVAGAVVALAADDPHWDALGLDRQVAGKPVHRVEGGAERRDSVRAALAYLGGIANPEDRVLVHDAVRPCLSAAELDRLIDEGGAAVDGALLATPVRDTLKRADGDCVGATVSREGLWQAQTPQLFPLRRLSAALDAALAAGVAVTDEAQAVEWHDGQPRLVTGEAGNLKITHQADLDLAAAVLTAQRAATEREQTA</sequence>
<proteinExistence type="inferred from homology"/>
<gene>
    <name evidence="1" type="primary">ispD</name>
    <name type="ordered locus">Hhal_1435</name>
</gene>
<name>ISPD_HALHL</name>
<dbReference type="EC" id="2.7.7.60" evidence="1"/>
<dbReference type="EMBL" id="CP000544">
    <property type="protein sequence ID" value="ABM62202.1"/>
    <property type="molecule type" value="Genomic_DNA"/>
</dbReference>
<dbReference type="RefSeq" id="WP_011814224.1">
    <property type="nucleotide sequence ID" value="NC_008789.1"/>
</dbReference>
<dbReference type="SMR" id="A1WWZ0"/>
<dbReference type="STRING" id="349124.Hhal_1435"/>
<dbReference type="KEGG" id="hha:Hhal_1435"/>
<dbReference type="eggNOG" id="COG1211">
    <property type="taxonomic scope" value="Bacteria"/>
</dbReference>
<dbReference type="HOGENOM" id="CLU_061281_3_1_6"/>
<dbReference type="OrthoDB" id="9806837at2"/>
<dbReference type="UniPathway" id="UPA00056">
    <property type="reaction ID" value="UER00093"/>
</dbReference>
<dbReference type="Proteomes" id="UP000000647">
    <property type="component" value="Chromosome"/>
</dbReference>
<dbReference type="GO" id="GO:0050518">
    <property type="term" value="F:2-C-methyl-D-erythritol 4-phosphate cytidylyltransferase activity"/>
    <property type="evidence" value="ECO:0007669"/>
    <property type="project" value="UniProtKB-UniRule"/>
</dbReference>
<dbReference type="GO" id="GO:0019288">
    <property type="term" value="P:isopentenyl diphosphate biosynthetic process, methylerythritol 4-phosphate pathway"/>
    <property type="evidence" value="ECO:0007669"/>
    <property type="project" value="UniProtKB-UniRule"/>
</dbReference>
<dbReference type="CDD" id="cd02516">
    <property type="entry name" value="CDP-ME_synthetase"/>
    <property type="match status" value="1"/>
</dbReference>
<dbReference type="FunFam" id="3.90.550.10:FF:000003">
    <property type="entry name" value="2-C-methyl-D-erythritol 4-phosphate cytidylyltransferase"/>
    <property type="match status" value="1"/>
</dbReference>
<dbReference type="Gene3D" id="3.90.550.10">
    <property type="entry name" value="Spore Coat Polysaccharide Biosynthesis Protein SpsA, Chain A"/>
    <property type="match status" value="1"/>
</dbReference>
<dbReference type="HAMAP" id="MF_00108">
    <property type="entry name" value="IspD"/>
    <property type="match status" value="1"/>
</dbReference>
<dbReference type="InterPro" id="IPR001228">
    <property type="entry name" value="IspD"/>
</dbReference>
<dbReference type="InterPro" id="IPR034683">
    <property type="entry name" value="IspD/TarI"/>
</dbReference>
<dbReference type="InterPro" id="IPR050088">
    <property type="entry name" value="IspD/TarI_cytidylyltransf_bact"/>
</dbReference>
<dbReference type="InterPro" id="IPR018294">
    <property type="entry name" value="ISPD_synthase_CS"/>
</dbReference>
<dbReference type="InterPro" id="IPR029044">
    <property type="entry name" value="Nucleotide-diphossugar_trans"/>
</dbReference>
<dbReference type="NCBIfam" id="TIGR00453">
    <property type="entry name" value="ispD"/>
    <property type="match status" value="1"/>
</dbReference>
<dbReference type="PANTHER" id="PTHR32125">
    <property type="entry name" value="2-C-METHYL-D-ERYTHRITOL 4-PHOSPHATE CYTIDYLYLTRANSFERASE, CHLOROPLASTIC"/>
    <property type="match status" value="1"/>
</dbReference>
<dbReference type="PANTHER" id="PTHR32125:SF4">
    <property type="entry name" value="2-C-METHYL-D-ERYTHRITOL 4-PHOSPHATE CYTIDYLYLTRANSFERASE, CHLOROPLASTIC"/>
    <property type="match status" value="1"/>
</dbReference>
<dbReference type="Pfam" id="PF01128">
    <property type="entry name" value="IspD"/>
    <property type="match status" value="1"/>
</dbReference>
<dbReference type="SUPFAM" id="SSF53448">
    <property type="entry name" value="Nucleotide-diphospho-sugar transferases"/>
    <property type="match status" value="1"/>
</dbReference>
<dbReference type="PROSITE" id="PS01295">
    <property type="entry name" value="ISPD"/>
    <property type="match status" value="1"/>
</dbReference>
<organism>
    <name type="scientific">Halorhodospira halophila (strain DSM 244 / SL1)</name>
    <name type="common">Ectothiorhodospira halophila (strain DSM 244 / SL1)</name>
    <dbReference type="NCBI Taxonomy" id="349124"/>
    <lineage>
        <taxon>Bacteria</taxon>
        <taxon>Pseudomonadati</taxon>
        <taxon>Pseudomonadota</taxon>
        <taxon>Gammaproteobacteria</taxon>
        <taxon>Chromatiales</taxon>
        <taxon>Ectothiorhodospiraceae</taxon>
        <taxon>Halorhodospira</taxon>
    </lineage>
</organism>